<dbReference type="EC" id="2.8.4.5"/>
<dbReference type="EMBL" id="AE000782">
    <property type="protein sequence ID" value="AAB89997.1"/>
    <property type="status" value="ALT_INIT"/>
    <property type="molecule type" value="Genomic_DNA"/>
</dbReference>
<dbReference type="PIR" id="F69405">
    <property type="entry name" value="F69405"/>
</dbReference>
<dbReference type="RefSeq" id="WP_048064356.1">
    <property type="nucleotide sequence ID" value="NC_000917.1"/>
</dbReference>
<dbReference type="SMR" id="O29021"/>
<dbReference type="STRING" id="224325.AF_1247"/>
<dbReference type="PaxDb" id="224325-AF_1247"/>
<dbReference type="DNASU" id="1484471"/>
<dbReference type="EnsemblBacteria" id="AAB89997">
    <property type="protein sequence ID" value="AAB89997"/>
    <property type="gene ID" value="AF_1247"/>
</dbReference>
<dbReference type="GeneID" id="1484471"/>
<dbReference type="KEGG" id="afu:AF_1247"/>
<dbReference type="eggNOG" id="arCOG01358">
    <property type="taxonomic scope" value="Archaea"/>
</dbReference>
<dbReference type="HOGENOM" id="CLU_018697_4_2_2"/>
<dbReference type="OrthoDB" id="372134at2157"/>
<dbReference type="Proteomes" id="UP000002199">
    <property type="component" value="Chromosome"/>
</dbReference>
<dbReference type="GO" id="GO:0051539">
    <property type="term" value="F:4 iron, 4 sulfur cluster binding"/>
    <property type="evidence" value="ECO:0007669"/>
    <property type="project" value="UniProtKB-KW"/>
</dbReference>
<dbReference type="GO" id="GO:0046872">
    <property type="term" value="F:metal ion binding"/>
    <property type="evidence" value="ECO:0007669"/>
    <property type="project" value="UniProtKB-KW"/>
</dbReference>
<dbReference type="GO" id="GO:0035598">
    <property type="term" value="F:N6-threonylcarbomyladenosine methylthiotransferase activity"/>
    <property type="evidence" value="ECO:0007669"/>
    <property type="project" value="InterPro"/>
</dbReference>
<dbReference type="GO" id="GO:0061712">
    <property type="term" value="F:tRNA (N(6)-L-threonylcarbamoyladenosine(37)-C(2))-methylthiotransferase"/>
    <property type="evidence" value="ECO:0007669"/>
    <property type="project" value="UniProtKB-EC"/>
</dbReference>
<dbReference type="CDD" id="cd01335">
    <property type="entry name" value="Radical_SAM"/>
    <property type="match status" value="1"/>
</dbReference>
<dbReference type="FunFam" id="3.80.30.20:FF:000002">
    <property type="entry name" value="threonylcarbamoyladenosine tRNA methylthiotransferase isoform X2"/>
    <property type="match status" value="1"/>
</dbReference>
<dbReference type="Gene3D" id="3.40.50.12160">
    <property type="entry name" value="Methylthiotransferase, N-terminal domain"/>
    <property type="match status" value="1"/>
</dbReference>
<dbReference type="Gene3D" id="3.80.30.20">
    <property type="entry name" value="tm_1862 like domain"/>
    <property type="match status" value="1"/>
</dbReference>
<dbReference type="InterPro" id="IPR006638">
    <property type="entry name" value="Elp3/MiaA/NifB-like_rSAM"/>
</dbReference>
<dbReference type="InterPro" id="IPR005839">
    <property type="entry name" value="Methylthiotransferase"/>
</dbReference>
<dbReference type="InterPro" id="IPR020612">
    <property type="entry name" value="Methylthiotransferase_CS"/>
</dbReference>
<dbReference type="InterPro" id="IPR013848">
    <property type="entry name" value="Methylthiotransferase_N"/>
</dbReference>
<dbReference type="InterPro" id="IPR038135">
    <property type="entry name" value="Methylthiotransferase_N_sf"/>
</dbReference>
<dbReference type="InterPro" id="IPR006466">
    <property type="entry name" value="MiaB-like_arc_euk"/>
</dbReference>
<dbReference type="InterPro" id="IPR007197">
    <property type="entry name" value="rSAM"/>
</dbReference>
<dbReference type="InterPro" id="IPR023404">
    <property type="entry name" value="rSAM_horseshoe"/>
</dbReference>
<dbReference type="InterPro" id="IPR002792">
    <property type="entry name" value="TRAM_dom"/>
</dbReference>
<dbReference type="NCBIfam" id="TIGR01578">
    <property type="entry name" value="MiaB-like-B"/>
    <property type="match status" value="1"/>
</dbReference>
<dbReference type="NCBIfam" id="TIGR00089">
    <property type="entry name" value="MiaB/RimO family radical SAM methylthiotransferase"/>
    <property type="match status" value="1"/>
</dbReference>
<dbReference type="PANTHER" id="PTHR11918">
    <property type="entry name" value="RADICAL SAM PROTEINS"/>
    <property type="match status" value="1"/>
</dbReference>
<dbReference type="PANTHER" id="PTHR11918:SF45">
    <property type="entry name" value="THREONYLCARBAMOYLADENOSINE TRNA METHYLTHIOTRANSFERASE"/>
    <property type="match status" value="1"/>
</dbReference>
<dbReference type="Pfam" id="PF04055">
    <property type="entry name" value="Radical_SAM"/>
    <property type="match status" value="1"/>
</dbReference>
<dbReference type="Pfam" id="PF01938">
    <property type="entry name" value="TRAM"/>
    <property type="match status" value="1"/>
</dbReference>
<dbReference type="Pfam" id="PF00919">
    <property type="entry name" value="UPF0004"/>
    <property type="match status" value="1"/>
</dbReference>
<dbReference type="SFLD" id="SFLDG01082">
    <property type="entry name" value="B12-binding_domain_containing"/>
    <property type="match status" value="1"/>
</dbReference>
<dbReference type="SFLD" id="SFLDG01061">
    <property type="entry name" value="methylthiotransferase"/>
    <property type="match status" value="1"/>
</dbReference>
<dbReference type="SFLD" id="SFLDS00029">
    <property type="entry name" value="Radical_SAM"/>
    <property type="match status" value="1"/>
</dbReference>
<dbReference type="SMART" id="SM00729">
    <property type="entry name" value="Elp3"/>
    <property type="match status" value="1"/>
</dbReference>
<dbReference type="SUPFAM" id="SSF102114">
    <property type="entry name" value="Radical SAM enzymes"/>
    <property type="match status" value="1"/>
</dbReference>
<dbReference type="PROSITE" id="PS51449">
    <property type="entry name" value="MTTASE_N"/>
    <property type="match status" value="1"/>
</dbReference>
<dbReference type="PROSITE" id="PS01278">
    <property type="entry name" value="MTTASE_RADICAL"/>
    <property type="match status" value="1"/>
</dbReference>
<dbReference type="PROSITE" id="PS51918">
    <property type="entry name" value="RADICAL_SAM"/>
    <property type="match status" value="1"/>
</dbReference>
<dbReference type="PROSITE" id="PS50926">
    <property type="entry name" value="TRAM"/>
    <property type="match status" value="1"/>
</dbReference>
<sequence>MRVAIETYGCTTNQADSDIMRGFLSGEFELSSVEDAEVVIINSCGVIDFTERKIIRRMLDLKREGKKVVLAGCLTRISKEALSVADSALSPDNLDMVVDAVYSALNGRKLFTERRFIDKAEFSHLKCRLRENAIAIVSISEGCLGKCSFCATKFARGRLRSFSMDAIVREAERAVRAGYREIQLTSQDTGAYGMDKGRAMLPELLRKISEIEGEFRVRVGMMNPQHAVRMLDELINAYSSEKIYKFLHIPVQSGDNRILEDMKRNHTVEDYVEVVEAFRNSFDDVLISTDIIVGFPTETEEAFWKSYELIKETRPDIVNITRYSARKGTPAARLRDIPGWIKKERSRKLTDLMRKIGLENNKRFVGKKLRVLVTKEGKNGRNLARMNSYRAVVTEGAVGEFVEVKIKDCRFNYLIGQLAAEQPQ</sequence>
<protein>
    <recommendedName>
        <fullName>Probable threonylcarbamoyladenosine tRNA methylthiotransferase</fullName>
        <ecNumber>2.8.4.5</ecNumber>
    </recommendedName>
    <alternativeName>
        <fullName>tRNA-t(6)A37 methylthiotransferase</fullName>
    </alternativeName>
</protein>
<organism>
    <name type="scientific">Archaeoglobus fulgidus (strain ATCC 49558 / DSM 4304 / JCM 9628 / NBRC 100126 / VC-16)</name>
    <dbReference type="NCBI Taxonomy" id="224325"/>
    <lineage>
        <taxon>Archaea</taxon>
        <taxon>Methanobacteriati</taxon>
        <taxon>Methanobacteriota</taxon>
        <taxon>Archaeoglobi</taxon>
        <taxon>Archaeoglobales</taxon>
        <taxon>Archaeoglobaceae</taxon>
        <taxon>Archaeoglobus</taxon>
    </lineage>
</organism>
<comment type="function">
    <text evidence="1">Catalyzes the methylthiolation of N6-threonylcarbamoyladenosine (t(6)A), leading to the formation of 2-methylthio-N6-threonylcarbamoyladenosine (ms(2)t(6)A) at position 37 in tRNAs that read codons beginning with adenine.</text>
</comment>
<comment type="catalytic activity">
    <reaction evidence="1">
        <text>N(6)-L-threonylcarbamoyladenosine(37) in tRNA + (sulfur carrier)-SH + AH2 + 2 S-adenosyl-L-methionine = 2-methylsulfanyl-N(6)-L-threonylcarbamoyladenosine(37) in tRNA + (sulfur carrier)-H + 5'-deoxyadenosine + L-methionine + A + S-adenosyl-L-homocysteine + 2 H(+)</text>
        <dbReference type="Rhea" id="RHEA:37075"/>
        <dbReference type="Rhea" id="RHEA-COMP:10163"/>
        <dbReference type="Rhea" id="RHEA-COMP:11092"/>
        <dbReference type="Rhea" id="RHEA-COMP:14737"/>
        <dbReference type="Rhea" id="RHEA-COMP:14739"/>
        <dbReference type="ChEBI" id="CHEBI:13193"/>
        <dbReference type="ChEBI" id="CHEBI:15378"/>
        <dbReference type="ChEBI" id="CHEBI:17319"/>
        <dbReference type="ChEBI" id="CHEBI:17499"/>
        <dbReference type="ChEBI" id="CHEBI:29917"/>
        <dbReference type="ChEBI" id="CHEBI:57844"/>
        <dbReference type="ChEBI" id="CHEBI:57856"/>
        <dbReference type="ChEBI" id="CHEBI:59789"/>
        <dbReference type="ChEBI" id="CHEBI:64428"/>
        <dbReference type="ChEBI" id="CHEBI:74418"/>
        <dbReference type="ChEBI" id="CHEBI:74420"/>
        <dbReference type="EC" id="2.8.4.5"/>
    </reaction>
</comment>
<comment type="cofactor">
    <cofactor evidence="3">
        <name>[4Fe-4S] cluster</name>
        <dbReference type="ChEBI" id="CHEBI:49883"/>
    </cofactor>
    <text evidence="3">Binds 2 [4Fe-4S] clusters. One cluster is coordinated with 3 cysteines and an exchangeable S-adenosyl-L-methionine.</text>
</comment>
<comment type="similarity">
    <text evidence="5">Belongs to the methylthiotransferase family. CDKAL1 subfamily.</text>
</comment>
<comment type="sequence caution" evidence="5">
    <conflict type="erroneous initiation">
        <sequence resource="EMBL-CDS" id="AAB89997"/>
    </conflict>
    <text>Truncated N-terminus.</text>
</comment>
<name>AMTAB_ARCFU</name>
<accession>O29021</accession>
<keyword id="KW-0004">4Fe-4S</keyword>
<keyword id="KW-0408">Iron</keyword>
<keyword id="KW-0411">Iron-sulfur</keyword>
<keyword id="KW-0479">Metal-binding</keyword>
<keyword id="KW-1185">Reference proteome</keyword>
<keyword id="KW-0949">S-adenosyl-L-methionine</keyword>
<keyword id="KW-0808">Transferase</keyword>
<keyword id="KW-0819">tRNA processing</keyword>
<evidence type="ECO:0000250" key="1">
    <source>
        <dbReference type="UniProtKB" id="Q5VV42"/>
    </source>
</evidence>
<evidence type="ECO:0000255" key="2">
    <source>
        <dbReference type="PROSITE-ProRule" id="PRU00208"/>
    </source>
</evidence>
<evidence type="ECO:0000255" key="3">
    <source>
        <dbReference type="PROSITE-ProRule" id="PRU00780"/>
    </source>
</evidence>
<evidence type="ECO:0000255" key="4">
    <source>
        <dbReference type="PROSITE-ProRule" id="PRU01266"/>
    </source>
</evidence>
<evidence type="ECO:0000305" key="5"/>
<feature type="chain" id="PRO_0000141758" description="Probable threonylcarbamoyladenosine tRNA methylthiotransferase">
    <location>
        <begin position="1"/>
        <end position="424"/>
    </location>
</feature>
<feature type="domain" description="MTTase N-terminal" evidence="3">
    <location>
        <begin position="1"/>
        <end position="106"/>
    </location>
</feature>
<feature type="domain" description="Radical SAM core" evidence="4">
    <location>
        <begin position="129"/>
        <end position="359"/>
    </location>
</feature>
<feature type="domain" description="TRAM" evidence="2">
    <location>
        <begin position="362"/>
        <end position="420"/>
    </location>
</feature>
<feature type="binding site" evidence="3">
    <location>
        <position position="10"/>
    </location>
    <ligand>
        <name>[4Fe-4S] cluster</name>
        <dbReference type="ChEBI" id="CHEBI:49883"/>
        <label>1</label>
    </ligand>
</feature>
<feature type="binding site" evidence="3">
    <location>
        <position position="44"/>
    </location>
    <ligand>
        <name>[4Fe-4S] cluster</name>
        <dbReference type="ChEBI" id="CHEBI:49883"/>
        <label>1</label>
    </ligand>
</feature>
<feature type="binding site" evidence="3">
    <location>
        <position position="73"/>
    </location>
    <ligand>
        <name>[4Fe-4S] cluster</name>
        <dbReference type="ChEBI" id="CHEBI:49883"/>
        <label>1</label>
    </ligand>
</feature>
<feature type="binding site" evidence="3">
    <location>
        <position position="143"/>
    </location>
    <ligand>
        <name>[4Fe-4S] cluster</name>
        <dbReference type="ChEBI" id="CHEBI:49883"/>
        <label>2</label>
        <note>4Fe-4S-S-AdoMet</note>
    </ligand>
</feature>
<feature type="binding site" evidence="3">
    <location>
        <position position="147"/>
    </location>
    <ligand>
        <name>[4Fe-4S] cluster</name>
        <dbReference type="ChEBI" id="CHEBI:49883"/>
        <label>2</label>
        <note>4Fe-4S-S-AdoMet</note>
    </ligand>
</feature>
<feature type="binding site" evidence="3">
    <location>
        <position position="150"/>
    </location>
    <ligand>
        <name>[4Fe-4S] cluster</name>
        <dbReference type="ChEBI" id="CHEBI:49883"/>
        <label>2</label>
        <note>4Fe-4S-S-AdoMet</note>
    </ligand>
</feature>
<proteinExistence type="inferred from homology"/>
<reference key="1">
    <citation type="journal article" date="1997" name="Nature">
        <title>The complete genome sequence of the hyperthermophilic, sulphate-reducing archaeon Archaeoglobus fulgidus.</title>
        <authorList>
            <person name="Klenk H.-P."/>
            <person name="Clayton R.A."/>
            <person name="Tomb J.-F."/>
            <person name="White O."/>
            <person name="Nelson K.E."/>
            <person name="Ketchum K.A."/>
            <person name="Dodson R.J."/>
            <person name="Gwinn M.L."/>
            <person name="Hickey E.K."/>
            <person name="Peterson J.D."/>
            <person name="Richardson D.L."/>
            <person name="Kerlavage A.R."/>
            <person name="Graham D.E."/>
            <person name="Kyrpides N.C."/>
            <person name="Fleischmann R.D."/>
            <person name="Quackenbush J."/>
            <person name="Lee N.H."/>
            <person name="Sutton G.G."/>
            <person name="Gill S.R."/>
            <person name="Kirkness E.F."/>
            <person name="Dougherty B.A."/>
            <person name="McKenney K."/>
            <person name="Adams M.D."/>
            <person name="Loftus B.J."/>
            <person name="Peterson S.N."/>
            <person name="Reich C.I."/>
            <person name="McNeil L.K."/>
            <person name="Badger J.H."/>
            <person name="Glodek A."/>
            <person name="Zhou L."/>
            <person name="Overbeek R."/>
            <person name="Gocayne J.D."/>
            <person name="Weidman J.F."/>
            <person name="McDonald L.A."/>
            <person name="Utterback T.R."/>
            <person name="Cotton M.D."/>
            <person name="Spriggs T."/>
            <person name="Artiach P."/>
            <person name="Kaine B.P."/>
            <person name="Sykes S.M."/>
            <person name="Sadow P.W."/>
            <person name="D'Andrea K.P."/>
            <person name="Bowman C."/>
            <person name="Fujii C."/>
            <person name="Garland S.A."/>
            <person name="Mason T.M."/>
            <person name="Olsen G.J."/>
            <person name="Fraser C.M."/>
            <person name="Smith H.O."/>
            <person name="Woese C.R."/>
            <person name="Venter J.C."/>
        </authorList>
    </citation>
    <scope>NUCLEOTIDE SEQUENCE [LARGE SCALE GENOMIC DNA]</scope>
    <source>
        <strain>ATCC 49558 / DSM 4304 / JCM 9628 / NBRC 100126 / VC-16</strain>
    </source>
</reference>
<gene>
    <name type="ordered locus">AF_1247</name>
</gene>